<dbReference type="EMBL" id="CP000559">
    <property type="protein sequence ID" value="ABN07337.1"/>
    <property type="molecule type" value="Genomic_DNA"/>
</dbReference>
<dbReference type="RefSeq" id="WP_011833540.1">
    <property type="nucleotide sequence ID" value="NC_008942.1"/>
</dbReference>
<dbReference type="SMR" id="A2SSN1"/>
<dbReference type="STRING" id="410358.Mlab_1168"/>
<dbReference type="GeneID" id="4795836"/>
<dbReference type="KEGG" id="mla:Mlab_1168"/>
<dbReference type="eggNOG" id="arCOG01166">
    <property type="taxonomic scope" value="Archaea"/>
</dbReference>
<dbReference type="HOGENOM" id="CLU_004131_4_1_2"/>
<dbReference type="OrthoDB" id="146201at2157"/>
<dbReference type="Proteomes" id="UP000000365">
    <property type="component" value="Chromosome"/>
</dbReference>
<dbReference type="GO" id="GO:0032300">
    <property type="term" value="C:mismatch repair complex"/>
    <property type="evidence" value="ECO:0007669"/>
    <property type="project" value="InterPro"/>
</dbReference>
<dbReference type="GO" id="GO:0005524">
    <property type="term" value="F:ATP binding"/>
    <property type="evidence" value="ECO:0007669"/>
    <property type="project" value="InterPro"/>
</dbReference>
<dbReference type="GO" id="GO:0016887">
    <property type="term" value="F:ATP hydrolysis activity"/>
    <property type="evidence" value="ECO:0007669"/>
    <property type="project" value="InterPro"/>
</dbReference>
<dbReference type="GO" id="GO:0140664">
    <property type="term" value="F:ATP-dependent DNA damage sensor activity"/>
    <property type="evidence" value="ECO:0007669"/>
    <property type="project" value="InterPro"/>
</dbReference>
<dbReference type="GO" id="GO:0030983">
    <property type="term" value="F:mismatched DNA binding"/>
    <property type="evidence" value="ECO:0007669"/>
    <property type="project" value="InterPro"/>
</dbReference>
<dbReference type="GO" id="GO:0006298">
    <property type="term" value="P:mismatch repair"/>
    <property type="evidence" value="ECO:0007669"/>
    <property type="project" value="UniProtKB-UniRule"/>
</dbReference>
<dbReference type="CDD" id="cd16926">
    <property type="entry name" value="HATPase_MutL-MLH-PMS-like"/>
    <property type="match status" value="1"/>
</dbReference>
<dbReference type="CDD" id="cd00782">
    <property type="entry name" value="MutL_Trans"/>
    <property type="match status" value="1"/>
</dbReference>
<dbReference type="FunFam" id="3.30.565.10:FF:000003">
    <property type="entry name" value="DNA mismatch repair endonuclease MutL"/>
    <property type="match status" value="1"/>
</dbReference>
<dbReference type="Gene3D" id="3.30.230.10">
    <property type="match status" value="1"/>
</dbReference>
<dbReference type="Gene3D" id="3.30.565.10">
    <property type="entry name" value="Histidine kinase-like ATPase, C-terminal domain"/>
    <property type="match status" value="1"/>
</dbReference>
<dbReference type="Gene3D" id="3.30.1540.20">
    <property type="entry name" value="MutL, C-terminal domain, dimerisation subdomain"/>
    <property type="match status" value="1"/>
</dbReference>
<dbReference type="Gene3D" id="3.30.1370.100">
    <property type="entry name" value="MutL, C-terminal domain, regulatory subdomain"/>
    <property type="match status" value="1"/>
</dbReference>
<dbReference type="HAMAP" id="MF_00149">
    <property type="entry name" value="DNA_mis_repair"/>
    <property type="match status" value="1"/>
</dbReference>
<dbReference type="InterPro" id="IPR014762">
    <property type="entry name" value="DNA_mismatch_repair_CS"/>
</dbReference>
<dbReference type="InterPro" id="IPR020667">
    <property type="entry name" value="DNA_mismatch_repair_MutL"/>
</dbReference>
<dbReference type="InterPro" id="IPR013507">
    <property type="entry name" value="DNA_mismatch_S5_2-like"/>
</dbReference>
<dbReference type="InterPro" id="IPR036890">
    <property type="entry name" value="HATPase_C_sf"/>
</dbReference>
<dbReference type="InterPro" id="IPR002099">
    <property type="entry name" value="MutL/Mlh/PMS"/>
</dbReference>
<dbReference type="InterPro" id="IPR038973">
    <property type="entry name" value="MutL/Mlh/Pms-like"/>
</dbReference>
<dbReference type="InterPro" id="IPR014790">
    <property type="entry name" value="MutL_C"/>
</dbReference>
<dbReference type="InterPro" id="IPR042120">
    <property type="entry name" value="MutL_C_dimsub"/>
</dbReference>
<dbReference type="InterPro" id="IPR042121">
    <property type="entry name" value="MutL_C_regsub"/>
</dbReference>
<dbReference type="InterPro" id="IPR037198">
    <property type="entry name" value="MutL_C_sf"/>
</dbReference>
<dbReference type="InterPro" id="IPR020568">
    <property type="entry name" value="Ribosomal_Su5_D2-typ_SF"/>
</dbReference>
<dbReference type="InterPro" id="IPR014721">
    <property type="entry name" value="Ribsml_uS5_D2-typ_fold_subgr"/>
</dbReference>
<dbReference type="NCBIfam" id="TIGR00585">
    <property type="entry name" value="mutl"/>
    <property type="match status" value="1"/>
</dbReference>
<dbReference type="PANTHER" id="PTHR10073">
    <property type="entry name" value="DNA MISMATCH REPAIR PROTEIN MLH, PMS, MUTL"/>
    <property type="match status" value="1"/>
</dbReference>
<dbReference type="PANTHER" id="PTHR10073:SF12">
    <property type="entry name" value="DNA MISMATCH REPAIR PROTEIN MLH1"/>
    <property type="match status" value="1"/>
</dbReference>
<dbReference type="Pfam" id="PF01119">
    <property type="entry name" value="DNA_mis_repair"/>
    <property type="match status" value="1"/>
</dbReference>
<dbReference type="Pfam" id="PF13589">
    <property type="entry name" value="HATPase_c_3"/>
    <property type="match status" value="1"/>
</dbReference>
<dbReference type="Pfam" id="PF08676">
    <property type="entry name" value="MutL_C"/>
    <property type="match status" value="1"/>
</dbReference>
<dbReference type="SMART" id="SM01340">
    <property type="entry name" value="DNA_mis_repair"/>
    <property type="match status" value="1"/>
</dbReference>
<dbReference type="SMART" id="SM00853">
    <property type="entry name" value="MutL_C"/>
    <property type="match status" value="1"/>
</dbReference>
<dbReference type="SUPFAM" id="SSF55874">
    <property type="entry name" value="ATPase domain of HSP90 chaperone/DNA topoisomerase II/histidine kinase"/>
    <property type="match status" value="1"/>
</dbReference>
<dbReference type="SUPFAM" id="SSF118116">
    <property type="entry name" value="DNA mismatch repair protein MutL"/>
    <property type="match status" value="1"/>
</dbReference>
<dbReference type="SUPFAM" id="SSF54211">
    <property type="entry name" value="Ribosomal protein S5 domain 2-like"/>
    <property type="match status" value="1"/>
</dbReference>
<dbReference type="PROSITE" id="PS00058">
    <property type="entry name" value="DNA_MISMATCH_REPAIR_1"/>
    <property type="match status" value="1"/>
</dbReference>
<gene>
    <name evidence="1" type="primary">mutL</name>
    <name type="ordered locus">Mlab_1168</name>
</gene>
<protein>
    <recommendedName>
        <fullName evidence="1">DNA mismatch repair protein MutL</fullName>
    </recommendedName>
</protein>
<keyword id="KW-0227">DNA damage</keyword>
<keyword id="KW-0234">DNA repair</keyword>
<keyword id="KW-1185">Reference proteome</keyword>
<accession>A2SSN1</accession>
<proteinExistence type="inferred from homology"/>
<comment type="function">
    <text evidence="1">This protein is involved in the repair of mismatches in DNA. It is required for dam-dependent methyl-directed DNA mismatch repair. May act as a 'molecular matchmaker', a protein that promotes the formation of a stable complex between two or more DNA-binding proteins in an ATP-dependent manner without itself being part of a final effector complex.</text>
</comment>
<comment type="similarity">
    <text evidence="1">Belongs to the DNA mismatch repair MutL/HexB family.</text>
</comment>
<organism>
    <name type="scientific">Methanocorpusculum labreanum (strain ATCC 43576 / DSM 4855 / Z)</name>
    <dbReference type="NCBI Taxonomy" id="410358"/>
    <lineage>
        <taxon>Archaea</taxon>
        <taxon>Methanobacteriati</taxon>
        <taxon>Methanobacteriota</taxon>
        <taxon>Stenosarchaea group</taxon>
        <taxon>Methanomicrobia</taxon>
        <taxon>Methanomicrobiales</taxon>
        <taxon>Methanocorpusculaceae</taxon>
        <taxon>Methanocorpusculum</taxon>
    </lineage>
</organism>
<reference key="1">
    <citation type="journal article" date="2009" name="Stand. Genomic Sci.">
        <title>Complete genome sequence of Methanocorpusculum labreanum type strain Z.</title>
        <authorList>
            <person name="Anderson I.J."/>
            <person name="Sieprawska-Lupa M."/>
            <person name="Goltsman E."/>
            <person name="Lapidus A."/>
            <person name="Copeland A."/>
            <person name="Glavina Del Rio T."/>
            <person name="Tice H."/>
            <person name="Dalin E."/>
            <person name="Barry K."/>
            <person name="Pitluck S."/>
            <person name="Hauser L."/>
            <person name="Land M."/>
            <person name="Lucas S."/>
            <person name="Richardson P."/>
            <person name="Whitman W.B."/>
            <person name="Kyrpides N.C."/>
        </authorList>
    </citation>
    <scope>NUCLEOTIDE SEQUENCE [LARGE SCALE GENOMIC DNA]</scope>
    <source>
        <strain>ATCC 43576 / DSM 4855 / Z</strain>
    </source>
</reference>
<sequence length="588" mass="64331">MSRVKILDEETISHIAAGEVVERAASVVKELVENAVDADAQIIRIGISADKTGITKISVTDDGIGMDFDDALLAFRQHATSKISRPEDLDGITTLGFRGEALASIAAISKVTFTTKERGSPSPEAARVVIHGGELISHSAVGAPEGTSVLIDALFYNTPARRKFQKSVPTELSHVYDMVERIALSNRNISFVLLYNGKERFQTFGTGSYPDVIAAVFGSTFSKELTPVSGSFGPVKIDGWITRPGSEMKTTQTRFYLSINGRQVTSRQLQWAIREGYGTLLPKGMYPAAFLDIVLDPRDVDVNVHPTKREVRLSREREVMRCVQDAVYTSLHEERVFSTAPMPTLARETITTLPVEIVGEPVPVYAGKQEMHEARQAPLKQTEKQLRRTESADLPETDLFVPEVLGQIGDTYILAKNESGDLIVVDQHAAHERIMYDQLLARSSSAEAGQELIVPQPITLSKKETAALPDLLDVLAAAGYLLEPFGKDVWMVRSVPVVSSTLGDPDTIHAILDAALDGVGNTDEVLDRVLKTAACRAVVKGNTPLTIEQMQRLLRQLMATKSPYTCPHGRPTTIVLSKSRLAGMFLRT</sequence>
<feature type="chain" id="PRO_1000010043" description="DNA mismatch repair protein MutL">
    <location>
        <begin position="1"/>
        <end position="588"/>
    </location>
</feature>
<name>MUTL_METLZ</name>
<evidence type="ECO:0000255" key="1">
    <source>
        <dbReference type="HAMAP-Rule" id="MF_00149"/>
    </source>
</evidence>